<feature type="chain" id="PRO_1000088332" description="Ribonuclease Z">
    <location>
        <begin position="1"/>
        <end position="308"/>
    </location>
</feature>
<feature type="active site" description="Proton acceptor" evidence="1">
    <location>
        <position position="65"/>
    </location>
</feature>
<feature type="binding site" evidence="1">
    <location>
        <position position="61"/>
    </location>
    <ligand>
        <name>Zn(2+)</name>
        <dbReference type="ChEBI" id="CHEBI:29105"/>
        <label>1</label>
        <note>catalytic</note>
    </ligand>
</feature>
<feature type="binding site" evidence="1">
    <location>
        <position position="63"/>
    </location>
    <ligand>
        <name>Zn(2+)</name>
        <dbReference type="ChEBI" id="CHEBI:29105"/>
        <label>1</label>
        <note>catalytic</note>
    </ligand>
</feature>
<feature type="binding site" evidence="1">
    <location>
        <position position="65"/>
    </location>
    <ligand>
        <name>Zn(2+)</name>
        <dbReference type="ChEBI" id="CHEBI:29105"/>
        <label>2</label>
        <note>catalytic</note>
    </ligand>
</feature>
<feature type="binding site" evidence="1">
    <location>
        <position position="66"/>
    </location>
    <ligand>
        <name>Zn(2+)</name>
        <dbReference type="ChEBI" id="CHEBI:29105"/>
        <label>2</label>
        <note>catalytic</note>
    </ligand>
</feature>
<feature type="binding site" evidence="1">
    <location>
        <position position="142"/>
    </location>
    <ligand>
        <name>Zn(2+)</name>
        <dbReference type="ChEBI" id="CHEBI:29105"/>
        <label>1</label>
        <note>catalytic</note>
    </ligand>
</feature>
<feature type="binding site" evidence="1">
    <location>
        <position position="211"/>
    </location>
    <ligand>
        <name>Zn(2+)</name>
        <dbReference type="ChEBI" id="CHEBI:29105"/>
        <label>1</label>
        <note>catalytic</note>
    </ligand>
</feature>
<feature type="binding site" evidence="1">
    <location>
        <position position="211"/>
    </location>
    <ligand>
        <name>Zn(2+)</name>
        <dbReference type="ChEBI" id="CHEBI:29105"/>
        <label>2</label>
        <note>catalytic</note>
    </ligand>
</feature>
<feature type="binding site" evidence="1">
    <location>
        <position position="270"/>
    </location>
    <ligand>
        <name>Zn(2+)</name>
        <dbReference type="ChEBI" id="CHEBI:29105"/>
        <label>2</label>
        <note>catalytic</note>
    </ligand>
</feature>
<sequence>MIDILLLGCGGGMPMPNRFLSATLINYRGRKILVDCGEGTQVSMRISNTGFKSIDIICITHIHGDHIVGLPGLLGTIGNSGRTEPITIIGPEGIRETVEKLRVIANWLPYEINIIENPKDTFKLFDGNINLDVDISVLELDHSSPCIGYCFYFKRQPKFDVEKAEKNKVPKILWNRLQRNEENIVLDGALYTNDMVTGEERKGIKVSIITDTRPIKNIIEFINDSDYFICEGTYGEDKDLPKAIKNKHMTFREAADLALKGNVKKLLLTHFGTAMNEPEEYLNNANEVFDKTIIGFDRYKTTLNFNED</sequence>
<keyword id="KW-0255">Endonuclease</keyword>
<keyword id="KW-0378">Hydrolase</keyword>
<keyword id="KW-0479">Metal-binding</keyword>
<keyword id="KW-0540">Nuclease</keyword>
<keyword id="KW-0819">tRNA processing</keyword>
<keyword id="KW-0862">Zinc</keyword>
<comment type="function">
    <text evidence="1">Zinc phosphodiesterase, which displays some tRNA 3'-processing endonuclease activity. Probably involved in tRNA maturation, by removing a 3'-trailer from precursor tRNA.</text>
</comment>
<comment type="catalytic activity">
    <reaction evidence="1">
        <text>Endonucleolytic cleavage of RNA, removing extra 3' nucleotides from tRNA precursor, generating 3' termini of tRNAs. A 3'-hydroxy group is left at the tRNA terminus and a 5'-phosphoryl group is left at the trailer molecule.</text>
        <dbReference type="EC" id="3.1.26.11"/>
    </reaction>
</comment>
<comment type="cofactor">
    <cofactor evidence="1">
        <name>Zn(2+)</name>
        <dbReference type="ChEBI" id="CHEBI:29105"/>
    </cofactor>
    <text evidence="1">Binds 2 Zn(2+) ions.</text>
</comment>
<comment type="subunit">
    <text evidence="1">Homodimer.</text>
</comment>
<comment type="similarity">
    <text evidence="1">Belongs to the RNase Z family.</text>
</comment>
<organism>
    <name type="scientific">Clostridium beijerinckii (strain ATCC 51743 / NCIMB 8052)</name>
    <name type="common">Clostridium acetobutylicum</name>
    <dbReference type="NCBI Taxonomy" id="290402"/>
    <lineage>
        <taxon>Bacteria</taxon>
        <taxon>Bacillati</taxon>
        <taxon>Bacillota</taxon>
        <taxon>Clostridia</taxon>
        <taxon>Eubacteriales</taxon>
        <taxon>Clostridiaceae</taxon>
        <taxon>Clostridium</taxon>
    </lineage>
</organism>
<reference key="1">
    <citation type="submission" date="2007-06" db="EMBL/GenBank/DDBJ databases">
        <title>Complete sequence of Clostridium beijerinckii NCIMB 8052.</title>
        <authorList>
            <consortium name="US DOE Joint Genome Institute"/>
            <person name="Copeland A."/>
            <person name="Lucas S."/>
            <person name="Lapidus A."/>
            <person name="Barry K."/>
            <person name="Detter J.C."/>
            <person name="Glavina del Rio T."/>
            <person name="Hammon N."/>
            <person name="Israni S."/>
            <person name="Dalin E."/>
            <person name="Tice H."/>
            <person name="Pitluck S."/>
            <person name="Sims D."/>
            <person name="Brettin T."/>
            <person name="Bruce D."/>
            <person name="Tapia R."/>
            <person name="Brainard J."/>
            <person name="Schmutz J."/>
            <person name="Larimer F."/>
            <person name="Land M."/>
            <person name="Hauser L."/>
            <person name="Kyrpides N."/>
            <person name="Mikhailova N."/>
            <person name="Bennet G."/>
            <person name="Cann I."/>
            <person name="Chen J.-S."/>
            <person name="Contreras A.L."/>
            <person name="Jones D."/>
            <person name="Kashket E."/>
            <person name="Mitchell W."/>
            <person name="Stoddard S."/>
            <person name="Schwarz W."/>
            <person name="Qureshi N."/>
            <person name="Young M."/>
            <person name="Shi Z."/>
            <person name="Ezeji T."/>
            <person name="White B."/>
            <person name="Blaschek H."/>
            <person name="Richardson P."/>
        </authorList>
    </citation>
    <scope>NUCLEOTIDE SEQUENCE [LARGE SCALE GENOMIC DNA]</scope>
    <source>
        <strain>ATCC 51743 / NCIMB 8052</strain>
    </source>
</reference>
<dbReference type="EC" id="3.1.26.11" evidence="1"/>
<dbReference type="EMBL" id="CP000721">
    <property type="protein sequence ID" value="ABR33912.1"/>
    <property type="molecule type" value="Genomic_DNA"/>
</dbReference>
<dbReference type="RefSeq" id="WP_011969064.1">
    <property type="nucleotide sequence ID" value="NC_009617.1"/>
</dbReference>
<dbReference type="SMR" id="A6LU82"/>
<dbReference type="KEGG" id="cbe:Cbei_1740"/>
<dbReference type="eggNOG" id="COG1234">
    <property type="taxonomic scope" value="Bacteria"/>
</dbReference>
<dbReference type="HOGENOM" id="CLU_031317_2_1_9"/>
<dbReference type="Proteomes" id="UP000000565">
    <property type="component" value="Chromosome"/>
</dbReference>
<dbReference type="GO" id="GO:0042781">
    <property type="term" value="F:3'-tRNA processing endoribonuclease activity"/>
    <property type="evidence" value="ECO:0007669"/>
    <property type="project" value="UniProtKB-UniRule"/>
</dbReference>
<dbReference type="GO" id="GO:0008270">
    <property type="term" value="F:zinc ion binding"/>
    <property type="evidence" value="ECO:0007669"/>
    <property type="project" value="UniProtKB-UniRule"/>
</dbReference>
<dbReference type="CDD" id="cd07717">
    <property type="entry name" value="RNaseZ_ZiPD-like_MBL-fold"/>
    <property type="match status" value="1"/>
</dbReference>
<dbReference type="Gene3D" id="3.60.15.10">
    <property type="entry name" value="Ribonuclease Z/Hydroxyacylglutathione hydrolase-like"/>
    <property type="match status" value="1"/>
</dbReference>
<dbReference type="HAMAP" id="MF_01818">
    <property type="entry name" value="RNase_Z_BN"/>
    <property type="match status" value="1"/>
</dbReference>
<dbReference type="InterPro" id="IPR001279">
    <property type="entry name" value="Metallo-B-lactamas"/>
</dbReference>
<dbReference type="InterPro" id="IPR036866">
    <property type="entry name" value="RibonucZ/Hydroxyglut_hydro"/>
</dbReference>
<dbReference type="InterPro" id="IPR013471">
    <property type="entry name" value="RNase_Z/BN"/>
</dbReference>
<dbReference type="NCBIfam" id="NF000801">
    <property type="entry name" value="PRK00055.1-3"/>
    <property type="match status" value="1"/>
</dbReference>
<dbReference type="NCBIfam" id="TIGR02651">
    <property type="entry name" value="RNase_Z"/>
    <property type="match status" value="1"/>
</dbReference>
<dbReference type="PANTHER" id="PTHR46018">
    <property type="entry name" value="ZINC PHOSPHODIESTERASE ELAC PROTEIN 1"/>
    <property type="match status" value="1"/>
</dbReference>
<dbReference type="PANTHER" id="PTHR46018:SF2">
    <property type="entry name" value="ZINC PHOSPHODIESTERASE ELAC PROTEIN 1"/>
    <property type="match status" value="1"/>
</dbReference>
<dbReference type="Pfam" id="PF00753">
    <property type="entry name" value="Lactamase_B"/>
    <property type="match status" value="1"/>
</dbReference>
<dbReference type="SMART" id="SM00849">
    <property type="entry name" value="Lactamase_B"/>
    <property type="match status" value="1"/>
</dbReference>
<dbReference type="SUPFAM" id="SSF56281">
    <property type="entry name" value="Metallo-hydrolase/oxidoreductase"/>
    <property type="match status" value="1"/>
</dbReference>
<proteinExistence type="inferred from homology"/>
<evidence type="ECO:0000255" key="1">
    <source>
        <dbReference type="HAMAP-Rule" id="MF_01818"/>
    </source>
</evidence>
<accession>A6LU82</accession>
<name>RNZ_CLOB8</name>
<gene>
    <name evidence="1" type="primary">rnz</name>
    <name type="ordered locus">Cbei_1740</name>
</gene>
<protein>
    <recommendedName>
        <fullName evidence="1">Ribonuclease Z</fullName>
        <shortName evidence="1">RNase Z</shortName>
        <ecNumber evidence="1">3.1.26.11</ecNumber>
    </recommendedName>
    <alternativeName>
        <fullName evidence="1">tRNA 3 endonuclease</fullName>
    </alternativeName>
    <alternativeName>
        <fullName evidence="1">tRNase Z</fullName>
    </alternativeName>
</protein>